<sequence length="506" mass="58120">MSPAGCSHVNGFKVDNWKQNLRVIYQCFVWSGSAETRKRKAKSCICHMCGAHLNRLHSCLHCVFFGCFSKKHIHEHAKNKRHNLAIDLLYGGIYCFVCQDYIYDKDMEQIAKEEQRKAWKLQGIGEKYSMWEPTKRELELLRHNPKRRKITANCTIGLRGLINLGNTCFMNCIVQALTHTPLLRDFFLSDRHKCEMQSNSCLVCEMSQLFQEFYSGHRSPHIPFRLLHLVWTHARHLAGYEQQDAHEFLIAALDVLHRHCKDDNGKKANNPNHCNCIIDQIFTGGLQSDVTCQVCHGVSTTIDPFWDISLDLPGSSTPFWPLSPGSDGSVVNGDSHPSGATTLTDCLRRFTRPEHLGSSAKIKCSGCHSYQESTKQLTMKRLPIVACFHLKRFEHSAKLRRKITTYVSFPLELDMTPFMASSKESRMNGQYQQPVDSLNNDNKYSLFAVVNHQGTLESGHYTTFIRQHKDQWFKCDDAIITKASIKDVLDSEGYLLFYHKQFLEYE</sequence>
<name>UBP22_DANRE</name>
<feature type="chain" id="PRO_0000367511" description="Ubiquitin carboxyl-terminal hydrolase 22">
    <location>
        <begin position="1"/>
        <end position="506"/>
    </location>
</feature>
<feature type="domain" description="USP">
    <location>
        <begin position="159"/>
        <end position="501"/>
    </location>
</feature>
<feature type="zinc finger region" description="UBP-type" evidence="3">
    <location>
        <begin position="4"/>
        <end position="121"/>
    </location>
</feature>
<feature type="active site" description="Nucleophile" evidence="4 5">
    <location>
        <position position="168"/>
    </location>
</feature>
<feature type="active site" description="Proton acceptor" evidence="4 5">
    <location>
        <position position="460"/>
    </location>
</feature>
<feature type="binding site" evidence="3">
    <location>
        <position position="6"/>
    </location>
    <ligand>
        <name>Zn(2+)</name>
        <dbReference type="ChEBI" id="CHEBI:29105"/>
        <label>1</label>
    </ligand>
</feature>
<feature type="binding site" evidence="3">
    <location>
        <position position="8"/>
    </location>
    <ligand>
        <name>Zn(2+)</name>
        <dbReference type="ChEBI" id="CHEBI:29105"/>
        <label>1</label>
    </ligand>
</feature>
<feature type="binding site" evidence="3">
    <location>
        <position position="46"/>
    </location>
    <ligand>
        <name>Zn(2+)</name>
        <dbReference type="ChEBI" id="CHEBI:29105"/>
        <label>2</label>
    </ligand>
</feature>
<feature type="binding site" evidence="3">
    <location>
        <position position="49"/>
    </location>
    <ligand>
        <name>Zn(2+)</name>
        <dbReference type="ChEBI" id="CHEBI:29105"/>
        <label>2</label>
    </ligand>
</feature>
<feature type="binding site" evidence="3">
    <location>
        <position position="59"/>
    </location>
    <ligand>
        <name>Zn(2+)</name>
        <dbReference type="ChEBI" id="CHEBI:29105"/>
        <label>3</label>
    </ligand>
</feature>
<feature type="binding site" evidence="3">
    <location>
        <position position="62"/>
    </location>
    <ligand>
        <name>Zn(2+)</name>
        <dbReference type="ChEBI" id="CHEBI:29105"/>
        <label>3</label>
    </ligand>
</feature>
<feature type="binding site" evidence="3">
    <location>
        <position position="67"/>
    </location>
    <ligand>
        <name>Zn(2+)</name>
        <dbReference type="ChEBI" id="CHEBI:29105"/>
        <label>2</label>
    </ligand>
</feature>
<feature type="binding site" evidence="3">
    <location>
        <position position="72"/>
    </location>
    <ligand>
        <name>Zn(2+)</name>
        <dbReference type="ChEBI" id="CHEBI:29105"/>
        <label>2</label>
    </ligand>
</feature>
<feature type="binding site" evidence="3">
    <location>
        <position position="76"/>
    </location>
    <ligand>
        <name>Zn(2+)</name>
        <dbReference type="ChEBI" id="CHEBI:29105"/>
        <label>3</label>
    </ligand>
</feature>
<feature type="binding site" evidence="3">
    <location>
        <position position="82"/>
    </location>
    <ligand>
        <name>Zn(2+)</name>
        <dbReference type="ChEBI" id="CHEBI:29105"/>
        <label>3</label>
    </ligand>
</feature>
<feature type="binding site" evidence="3">
    <location>
        <position position="95"/>
    </location>
    <ligand>
        <name>Zn(2+)</name>
        <dbReference type="ChEBI" id="CHEBI:29105"/>
        <label>1</label>
    </ligand>
</feature>
<feature type="binding site" evidence="3">
    <location>
        <position position="98"/>
    </location>
    <ligand>
        <name>Zn(2+)</name>
        <dbReference type="ChEBI" id="CHEBI:29105"/>
        <label>1</label>
    </ligand>
</feature>
<feature type="splice variant" id="VSP_036726" description="In isoform 2." evidence="6">
    <original>K</original>
    <variation>KG</variation>
    <location>
        <position position="261"/>
    </location>
</feature>
<feature type="splice variant" id="VSP_036727" description="In isoform 2." evidence="6">
    <original>RFEHSAKLRRKITTYVSFPLELDMTPFMASSKESRMNGQYQQPVDSLNNDNKYSLFAVVNHQGTLESGHYTTFIRQHKDQWFKCDDAIITKASIKDVLDSEGYLLFYHKQFLEYE</original>
    <variation>VRAELLLSVLIFQHPLNVFVCFSAV</variation>
    <location>
        <begin position="392"/>
        <end position="506"/>
    </location>
</feature>
<feature type="sequence conflict" description="In Ref. 1; AAI16509." evidence="7" ref="1">
    <original>Y</original>
    <variation>H</variation>
    <location>
        <position position="90"/>
    </location>
</feature>
<protein>
    <recommendedName>
        <fullName>Ubiquitin carboxyl-terminal hydrolase 22</fullName>
        <ecNumber>3.4.19.12</ecNumber>
    </recommendedName>
    <alternativeName>
        <fullName>Deubiquitinating enzyme 22</fullName>
    </alternativeName>
    <alternativeName>
        <fullName>Ubiquitin thioesterase 22</fullName>
    </alternativeName>
    <alternativeName>
        <fullName>Ubiquitin-specific-processing protease 22</fullName>
    </alternativeName>
</protein>
<evidence type="ECO:0000250" key="1"/>
<evidence type="ECO:0000250" key="2">
    <source>
        <dbReference type="UniProtKB" id="Q5DU02"/>
    </source>
</evidence>
<evidence type="ECO:0000255" key="3">
    <source>
        <dbReference type="PROSITE-ProRule" id="PRU00502"/>
    </source>
</evidence>
<evidence type="ECO:0000255" key="4">
    <source>
        <dbReference type="PROSITE-ProRule" id="PRU10092"/>
    </source>
</evidence>
<evidence type="ECO:0000255" key="5">
    <source>
        <dbReference type="PROSITE-ProRule" id="PRU10093"/>
    </source>
</evidence>
<evidence type="ECO:0000303" key="6">
    <source ref="1"/>
</evidence>
<evidence type="ECO:0000305" key="7"/>
<reference key="1">
    <citation type="submission" date="2007-06" db="EMBL/GenBank/DDBJ databases">
        <authorList>
            <consortium name="NIH - Zebrafish Gene Collection (ZGC) project"/>
        </authorList>
    </citation>
    <scope>NUCLEOTIDE SEQUENCE [LARGE SCALE MRNA] (ISOFORMS 1 AND 2)</scope>
    <source>
        <tissue>Embryo</tissue>
        <tissue>Eye</tissue>
    </source>
</reference>
<organism>
    <name type="scientific">Danio rerio</name>
    <name type="common">Zebrafish</name>
    <name type="synonym">Brachydanio rerio</name>
    <dbReference type="NCBI Taxonomy" id="7955"/>
    <lineage>
        <taxon>Eukaryota</taxon>
        <taxon>Metazoa</taxon>
        <taxon>Chordata</taxon>
        <taxon>Craniata</taxon>
        <taxon>Vertebrata</taxon>
        <taxon>Euteleostomi</taxon>
        <taxon>Actinopterygii</taxon>
        <taxon>Neopterygii</taxon>
        <taxon>Teleostei</taxon>
        <taxon>Ostariophysi</taxon>
        <taxon>Cypriniformes</taxon>
        <taxon>Danionidae</taxon>
        <taxon>Danioninae</taxon>
        <taxon>Danio</taxon>
    </lineage>
</organism>
<keyword id="KW-0010">Activator</keyword>
<keyword id="KW-0025">Alternative splicing</keyword>
<keyword id="KW-0131">Cell cycle</keyword>
<keyword id="KW-0156">Chromatin regulator</keyword>
<keyword id="KW-0378">Hydrolase</keyword>
<keyword id="KW-0479">Metal-binding</keyword>
<keyword id="KW-0539">Nucleus</keyword>
<keyword id="KW-0645">Protease</keyword>
<keyword id="KW-1185">Reference proteome</keyword>
<keyword id="KW-0788">Thiol protease</keyword>
<keyword id="KW-0804">Transcription</keyword>
<keyword id="KW-0805">Transcription regulation</keyword>
<keyword id="KW-0833">Ubl conjugation pathway</keyword>
<keyword id="KW-0862">Zinc</keyword>
<keyword id="KW-0863">Zinc-finger</keyword>
<accession>A6H8I0</accession>
<accession>Q1JQ28</accession>
<gene>
    <name type="primary">usp22</name>
    <name type="ORF">zgc:136342</name>
</gene>
<proteinExistence type="evidence at transcript level"/>
<dbReference type="EC" id="3.4.19.12"/>
<dbReference type="EMBL" id="BC116508">
    <property type="protein sequence ID" value="AAI16509.1"/>
    <property type="molecule type" value="mRNA"/>
</dbReference>
<dbReference type="EMBL" id="BC146618">
    <property type="protein sequence ID" value="AAI46619.1"/>
    <property type="molecule type" value="mRNA"/>
</dbReference>
<dbReference type="RefSeq" id="NP_001038713.1">
    <property type="nucleotide sequence ID" value="NM_001045248.1"/>
</dbReference>
<dbReference type="RefSeq" id="XP_021335835.1">
    <molecule id="A6H8I0-1"/>
    <property type="nucleotide sequence ID" value="XM_021480160.2"/>
</dbReference>
<dbReference type="SMR" id="A6H8I0"/>
<dbReference type="FunCoup" id="A6H8I0">
    <property type="interactions" value="2042"/>
</dbReference>
<dbReference type="STRING" id="7955.ENSDARP00000059142"/>
<dbReference type="PaxDb" id="7955-ENSDARP00000126663"/>
<dbReference type="Ensembl" id="ENSDART00000059143">
    <molecule id="A6H8I0-1"/>
    <property type="protein sequence ID" value="ENSDARP00000059142"/>
    <property type="gene ID" value="ENSDARG00000040407"/>
</dbReference>
<dbReference type="GeneID" id="692275"/>
<dbReference type="KEGG" id="dre:692275"/>
<dbReference type="AGR" id="ZFIN:ZDB-GENE-060512-211"/>
<dbReference type="CTD" id="23326"/>
<dbReference type="ZFIN" id="ZDB-GENE-060512-211">
    <property type="gene designation" value="usp22"/>
</dbReference>
<dbReference type="eggNOG" id="KOG1867">
    <property type="taxonomic scope" value="Eukaryota"/>
</dbReference>
<dbReference type="InParanoid" id="A6H8I0"/>
<dbReference type="OMA" id="FRTRTVH"/>
<dbReference type="OrthoDB" id="47475at2759"/>
<dbReference type="PhylomeDB" id="A6H8I0"/>
<dbReference type="Reactome" id="R-DRE-5689880">
    <property type="pathway name" value="Ub-specific processing proteases"/>
</dbReference>
<dbReference type="PRO" id="PR:A6H8I0"/>
<dbReference type="Proteomes" id="UP000000437">
    <property type="component" value="Chromosome 12"/>
</dbReference>
<dbReference type="Bgee" id="ENSDARG00000040407">
    <property type="expression patterns" value="Expressed in tail and 21 other cell types or tissues"/>
</dbReference>
<dbReference type="ExpressionAtlas" id="A6H8I0">
    <property type="expression patterns" value="baseline"/>
</dbReference>
<dbReference type="GO" id="GO:0005634">
    <property type="term" value="C:nucleus"/>
    <property type="evidence" value="ECO:0007669"/>
    <property type="project" value="UniProtKB-SubCell"/>
</dbReference>
<dbReference type="GO" id="GO:0004843">
    <property type="term" value="F:cysteine-type deubiquitinase activity"/>
    <property type="evidence" value="ECO:0007669"/>
    <property type="project" value="UniProtKB-EC"/>
</dbReference>
<dbReference type="GO" id="GO:0008270">
    <property type="term" value="F:zinc ion binding"/>
    <property type="evidence" value="ECO:0007669"/>
    <property type="project" value="UniProtKB-KW"/>
</dbReference>
<dbReference type="GO" id="GO:0006325">
    <property type="term" value="P:chromatin organization"/>
    <property type="evidence" value="ECO:0007669"/>
    <property type="project" value="UniProtKB-KW"/>
</dbReference>
<dbReference type="GO" id="GO:0016579">
    <property type="term" value="P:protein deubiquitination"/>
    <property type="evidence" value="ECO:0007669"/>
    <property type="project" value="InterPro"/>
</dbReference>
<dbReference type="GO" id="GO:0006508">
    <property type="term" value="P:proteolysis"/>
    <property type="evidence" value="ECO:0007669"/>
    <property type="project" value="UniProtKB-KW"/>
</dbReference>
<dbReference type="CDD" id="cd02660">
    <property type="entry name" value="Peptidase_C19D"/>
    <property type="match status" value="1"/>
</dbReference>
<dbReference type="FunFam" id="3.30.40.10:FF:000141">
    <property type="entry name" value="Ubiquitinyl hydrolase 1"/>
    <property type="match status" value="1"/>
</dbReference>
<dbReference type="FunFam" id="3.90.70.10:FF:000011">
    <property type="entry name" value="Ubiquitinyl hydrolase 1"/>
    <property type="match status" value="1"/>
</dbReference>
<dbReference type="Gene3D" id="3.90.70.10">
    <property type="entry name" value="Cysteine proteinases"/>
    <property type="match status" value="1"/>
</dbReference>
<dbReference type="Gene3D" id="3.30.40.10">
    <property type="entry name" value="Zinc/RING finger domain, C3HC4 (zinc finger)"/>
    <property type="match status" value="1"/>
</dbReference>
<dbReference type="InterPro" id="IPR038765">
    <property type="entry name" value="Papain-like_cys_pep_sf"/>
</dbReference>
<dbReference type="InterPro" id="IPR001394">
    <property type="entry name" value="Peptidase_C19_UCH"/>
</dbReference>
<dbReference type="InterPro" id="IPR050185">
    <property type="entry name" value="Ub_carboxyl-term_hydrolase"/>
</dbReference>
<dbReference type="InterPro" id="IPR018200">
    <property type="entry name" value="USP_CS"/>
</dbReference>
<dbReference type="InterPro" id="IPR028889">
    <property type="entry name" value="USP_dom"/>
</dbReference>
<dbReference type="InterPro" id="IPR013083">
    <property type="entry name" value="Znf_RING/FYVE/PHD"/>
</dbReference>
<dbReference type="InterPro" id="IPR001607">
    <property type="entry name" value="Znf_UBP"/>
</dbReference>
<dbReference type="PANTHER" id="PTHR21646">
    <property type="entry name" value="UBIQUITIN CARBOXYL-TERMINAL HYDROLASE"/>
    <property type="match status" value="1"/>
</dbReference>
<dbReference type="PANTHER" id="PTHR21646:SF33">
    <property type="entry name" value="UBIQUITIN CARBOXYL-TERMINAL HYDROLASE 22"/>
    <property type="match status" value="1"/>
</dbReference>
<dbReference type="Pfam" id="PF00443">
    <property type="entry name" value="UCH"/>
    <property type="match status" value="1"/>
</dbReference>
<dbReference type="Pfam" id="PF02148">
    <property type="entry name" value="zf-UBP"/>
    <property type="match status" value="1"/>
</dbReference>
<dbReference type="SUPFAM" id="SSF54001">
    <property type="entry name" value="Cysteine proteinases"/>
    <property type="match status" value="1"/>
</dbReference>
<dbReference type="SUPFAM" id="SSF57850">
    <property type="entry name" value="RING/U-box"/>
    <property type="match status" value="1"/>
</dbReference>
<dbReference type="PROSITE" id="PS00972">
    <property type="entry name" value="USP_1"/>
    <property type="match status" value="1"/>
</dbReference>
<dbReference type="PROSITE" id="PS00973">
    <property type="entry name" value="USP_2"/>
    <property type="match status" value="1"/>
</dbReference>
<dbReference type="PROSITE" id="PS50235">
    <property type="entry name" value="USP_3"/>
    <property type="match status" value="1"/>
</dbReference>
<dbReference type="PROSITE" id="PS50271">
    <property type="entry name" value="ZF_UBP"/>
    <property type="match status" value="1"/>
</dbReference>
<comment type="function">
    <text evidence="1">Histone deubiquitinating component of the transcription regulatory histone acetylation (HAT) complex SAGA. Catalyzes the deubiquitination of both histones H2A and H2B, thereby acting as a coactivator. Recruited to specific gene promoters by activators, where it is required for transcription (By similarity).</text>
</comment>
<comment type="catalytic activity">
    <reaction>
        <text>Thiol-dependent hydrolysis of ester, thioester, amide, peptide and isopeptide bonds formed by the C-terminal Gly of ubiquitin (a 76-residue protein attached to proteins as an intracellular targeting signal).</text>
        <dbReference type="EC" id="3.4.19.12"/>
    </reaction>
</comment>
<comment type="subunit">
    <text evidence="1">Component of some SAGA transcription coactivator-HAT complexes.</text>
</comment>
<comment type="subcellular location">
    <subcellularLocation>
        <location evidence="2">Nucleus</location>
    </subcellularLocation>
</comment>
<comment type="alternative products">
    <event type="alternative splicing"/>
    <isoform>
        <id>A6H8I0-1</id>
        <name>1</name>
        <sequence type="displayed"/>
    </isoform>
    <isoform>
        <id>A6H8I0-2</id>
        <name>2</name>
        <sequence type="described" ref="VSP_036726 VSP_036727"/>
    </isoform>
</comment>
<comment type="similarity">
    <text evidence="7">Belongs to the peptidase C19 family. UBP8 subfamily.</text>
</comment>